<gene>
    <name evidence="1" type="primary">purR</name>
    <name type="ordered locus">VC_1721</name>
</gene>
<proteinExistence type="inferred from homology"/>
<feature type="chain" id="PRO_0000279672" description="HTH-type transcriptional repressor PurR">
    <location>
        <begin position="1"/>
        <end position="336"/>
    </location>
</feature>
<feature type="domain" description="HTH lacI-type" evidence="1">
    <location>
        <begin position="2"/>
        <end position="56"/>
    </location>
</feature>
<feature type="DNA-binding region" description="H-T-H motif" evidence="1">
    <location>
        <begin position="4"/>
        <end position="23"/>
    </location>
</feature>
<feature type="DNA-binding region" evidence="1">
    <location>
        <begin position="48"/>
        <end position="56"/>
    </location>
</feature>
<feature type="binding site" evidence="1">
    <location>
        <position position="73"/>
    </location>
    <ligand>
        <name>hypoxanthine</name>
        <dbReference type="ChEBI" id="CHEBI:17368"/>
    </ligand>
</feature>
<feature type="binding site" evidence="1">
    <location>
        <position position="189"/>
    </location>
    <ligand>
        <name>hypoxanthine</name>
        <dbReference type="ChEBI" id="CHEBI:17368"/>
    </ligand>
</feature>
<feature type="binding site" evidence="1">
    <location>
        <position position="220"/>
    </location>
    <ligand>
        <name>hypoxanthine</name>
        <dbReference type="ChEBI" id="CHEBI:17368"/>
    </ligand>
</feature>
<feature type="binding site" evidence="1">
    <location>
        <position position="274"/>
    </location>
    <ligand>
        <name>hypoxanthine</name>
        <dbReference type="ChEBI" id="CHEBI:17368"/>
    </ligand>
</feature>
<organism>
    <name type="scientific">Vibrio cholerae serotype O1 (strain ATCC 39315 / El Tor Inaba N16961)</name>
    <dbReference type="NCBI Taxonomy" id="243277"/>
    <lineage>
        <taxon>Bacteria</taxon>
        <taxon>Pseudomonadati</taxon>
        <taxon>Pseudomonadota</taxon>
        <taxon>Gammaproteobacteria</taxon>
        <taxon>Vibrionales</taxon>
        <taxon>Vibrionaceae</taxon>
        <taxon>Vibrio</taxon>
    </lineage>
</organism>
<reference key="1">
    <citation type="journal article" date="2000" name="Nature">
        <title>DNA sequence of both chromosomes of the cholera pathogen Vibrio cholerae.</title>
        <authorList>
            <person name="Heidelberg J.F."/>
            <person name="Eisen J.A."/>
            <person name="Nelson W.C."/>
            <person name="Clayton R.A."/>
            <person name="Gwinn M.L."/>
            <person name="Dodson R.J."/>
            <person name="Haft D.H."/>
            <person name="Hickey E.K."/>
            <person name="Peterson J.D."/>
            <person name="Umayam L.A."/>
            <person name="Gill S.R."/>
            <person name="Nelson K.E."/>
            <person name="Read T.D."/>
            <person name="Tettelin H."/>
            <person name="Richardson D.L."/>
            <person name="Ermolaeva M.D."/>
            <person name="Vamathevan J.J."/>
            <person name="Bass S."/>
            <person name="Qin H."/>
            <person name="Dragoi I."/>
            <person name="Sellers P."/>
            <person name="McDonald L.A."/>
            <person name="Utterback T.R."/>
            <person name="Fleischmann R.D."/>
            <person name="Nierman W.C."/>
            <person name="White O."/>
            <person name="Salzberg S.L."/>
            <person name="Smith H.O."/>
            <person name="Colwell R.R."/>
            <person name="Mekalanos J.J."/>
            <person name="Venter J.C."/>
            <person name="Fraser C.M."/>
        </authorList>
    </citation>
    <scope>NUCLEOTIDE SEQUENCE [LARGE SCALE GENOMIC DNA]</scope>
    <source>
        <strain>ATCC 39315 / El Tor Inaba N16961</strain>
    </source>
</reference>
<protein>
    <recommendedName>
        <fullName evidence="1">HTH-type transcriptional repressor PurR</fullName>
    </recommendedName>
    <alternativeName>
        <fullName evidence="1">Pur regulon repressor</fullName>
    </alternativeName>
    <alternativeName>
        <fullName evidence="1">Purine nucleotide synthesis repressor</fullName>
    </alternativeName>
</protein>
<sequence length="336" mass="38002">MATIKDVARLAGVSTTTVSHVINKTRFVAETTQEKVMEAVKQLNYAPSAVARSLKCNTTRTIGMLVTQSTNLFFSEVIDGVESYCYRQGYTLILCNTGGIYEKQRDYIRMLAEKRVDGILVMCSDLTQELQDMLDAHKDIPKVVMDWGPETSHADKIIDNSEEGGYLATKYLTDRGHTEIACLSGHFVKAACQERIQGFRRAMAEAKLTVNEDWILEGNFECDTAVLAADKIIAMDKRPTAVFCFNDTMALGLMSRLQQKGIRIPEDMSVIGYDNIELAEYFSPPLTTVHQPKRRVGKNAFEILLERIKDKEHERRIFEMHPEIVERDTVKDLTKS</sequence>
<evidence type="ECO:0000255" key="1">
    <source>
        <dbReference type="HAMAP-Rule" id="MF_01277"/>
    </source>
</evidence>
<comment type="function">
    <text evidence="1">Is the main repressor of the genes involved in the de novo synthesis of purine nucleotides, regulating purB, purC, purEK, purF, purHD, purL, purMN and guaBA expression. PurR is allosterically activated to bind its cognate DNA by binding the purine corepressors, hypoxanthine or guanine, thereby effecting transcription repression.</text>
</comment>
<comment type="pathway">
    <text>Purine metabolism; purine nucleotide biosynthesis [regulation].</text>
</comment>
<comment type="subunit">
    <text evidence="1">Homodimer.</text>
</comment>
<comment type="domain">
    <text evidence="1">Consists of two structural and functional domains: an N-terminal DNA-binding domain, approximately the first 60 residues, and a larger C-terminal domain, approximately 280 residues, which imparts the function of corepressor binding and oligomerization.</text>
</comment>
<name>PURR_VIBCH</name>
<dbReference type="EMBL" id="AE003852">
    <property type="protein sequence ID" value="AAF94871.1"/>
    <property type="molecule type" value="Genomic_DNA"/>
</dbReference>
<dbReference type="PIR" id="A82165">
    <property type="entry name" value="A82165"/>
</dbReference>
<dbReference type="RefSeq" id="NP_231357.1">
    <property type="nucleotide sequence ID" value="NC_002505.1"/>
</dbReference>
<dbReference type="RefSeq" id="WP_000201014.1">
    <property type="nucleotide sequence ID" value="NZ_LT906614.1"/>
</dbReference>
<dbReference type="SMR" id="Q9KRC1"/>
<dbReference type="STRING" id="243277.VC_1721"/>
<dbReference type="DNASU" id="2613726"/>
<dbReference type="EnsemblBacteria" id="AAF94871">
    <property type="protein sequence ID" value="AAF94871"/>
    <property type="gene ID" value="VC_1721"/>
</dbReference>
<dbReference type="GeneID" id="69719647"/>
<dbReference type="KEGG" id="vch:VC_1721"/>
<dbReference type="PATRIC" id="fig|243277.26.peg.1647"/>
<dbReference type="eggNOG" id="COG1609">
    <property type="taxonomic scope" value="Bacteria"/>
</dbReference>
<dbReference type="HOGENOM" id="CLU_037628_6_2_6"/>
<dbReference type="UniPathway" id="UPA00488"/>
<dbReference type="Proteomes" id="UP000000584">
    <property type="component" value="Chromosome 1"/>
</dbReference>
<dbReference type="GO" id="GO:0003700">
    <property type="term" value="F:DNA-binding transcription factor activity"/>
    <property type="evidence" value="ECO:0000318"/>
    <property type="project" value="GO_Central"/>
</dbReference>
<dbReference type="GO" id="GO:0000976">
    <property type="term" value="F:transcription cis-regulatory region binding"/>
    <property type="evidence" value="ECO:0000318"/>
    <property type="project" value="GO_Central"/>
</dbReference>
<dbReference type="GO" id="GO:0045892">
    <property type="term" value="P:negative regulation of DNA-templated transcription"/>
    <property type="evidence" value="ECO:0007669"/>
    <property type="project" value="UniProtKB-UniRule"/>
</dbReference>
<dbReference type="GO" id="GO:0006164">
    <property type="term" value="P:purine nucleotide biosynthetic process"/>
    <property type="evidence" value="ECO:0007669"/>
    <property type="project" value="UniProtKB-UniPathway"/>
</dbReference>
<dbReference type="GO" id="GO:0006355">
    <property type="term" value="P:regulation of DNA-templated transcription"/>
    <property type="evidence" value="ECO:0000318"/>
    <property type="project" value="GO_Central"/>
</dbReference>
<dbReference type="CDD" id="cd01392">
    <property type="entry name" value="HTH_LacI"/>
    <property type="match status" value="1"/>
</dbReference>
<dbReference type="CDD" id="cd06275">
    <property type="entry name" value="PBP1_PurR"/>
    <property type="match status" value="1"/>
</dbReference>
<dbReference type="FunFam" id="1.10.260.40:FF:000002">
    <property type="entry name" value="HTH-type transcriptional repressor PurR"/>
    <property type="match status" value="1"/>
</dbReference>
<dbReference type="FunFam" id="3.40.50.2300:FF:000319">
    <property type="entry name" value="HTH-type transcriptional repressor PurR"/>
    <property type="match status" value="1"/>
</dbReference>
<dbReference type="Gene3D" id="3.40.50.2300">
    <property type="match status" value="2"/>
</dbReference>
<dbReference type="Gene3D" id="1.10.260.40">
    <property type="entry name" value="lambda repressor-like DNA-binding domains"/>
    <property type="match status" value="1"/>
</dbReference>
<dbReference type="HAMAP" id="MF_01277">
    <property type="entry name" value="HTH_type_PurR"/>
    <property type="match status" value="1"/>
</dbReference>
<dbReference type="InterPro" id="IPR000843">
    <property type="entry name" value="HTH_LacI"/>
</dbReference>
<dbReference type="InterPro" id="IPR046335">
    <property type="entry name" value="LacI/GalR-like_sensor"/>
</dbReference>
<dbReference type="InterPro" id="IPR010982">
    <property type="entry name" value="Lambda_DNA-bd_dom_sf"/>
</dbReference>
<dbReference type="InterPro" id="IPR028082">
    <property type="entry name" value="Peripla_BP_I"/>
</dbReference>
<dbReference type="InterPro" id="IPR023588">
    <property type="entry name" value="Tscrpt_reg_HTH_PurR"/>
</dbReference>
<dbReference type="PANTHER" id="PTHR30146:SF148">
    <property type="entry name" value="HTH-TYPE TRANSCRIPTIONAL REPRESSOR PURR-RELATED"/>
    <property type="match status" value="1"/>
</dbReference>
<dbReference type="PANTHER" id="PTHR30146">
    <property type="entry name" value="LACI-RELATED TRANSCRIPTIONAL REPRESSOR"/>
    <property type="match status" value="1"/>
</dbReference>
<dbReference type="Pfam" id="PF00356">
    <property type="entry name" value="LacI"/>
    <property type="match status" value="1"/>
</dbReference>
<dbReference type="Pfam" id="PF13377">
    <property type="entry name" value="Peripla_BP_3"/>
    <property type="match status" value="1"/>
</dbReference>
<dbReference type="PRINTS" id="PR00036">
    <property type="entry name" value="HTHLACI"/>
</dbReference>
<dbReference type="SMART" id="SM00354">
    <property type="entry name" value="HTH_LACI"/>
    <property type="match status" value="1"/>
</dbReference>
<dbReference type="SUPFAM" id="SSF47413">
    <property type="entry name" value="lambda repressor-like DNA-binding domains"/>
    <property type="match status" value="1"/>
</dbReference>
<dbReference type="SUPFAM" id="SSF53822">
    <property type="entry name" value="Periplasmic binding protein-like I"/>
    <property type="match status" value="1"/>
</dbReference>
<dbReference type="PROSITE" id="PS00356">
    <property type="entry name" value="HTH_LACI_1"/>
    <property type="match status" value="1"/>
</dbReference>
<dbReference type="PROSITE" id="PS50932">
    <property type="entry name" value="HTH_LACI_2"/>
    <property type="match status" value="1"/>
</dbReference>
<accession>Q9KRC1</accession>
<keyword id="KW-0238">DNA-binding</keyword>
<keyword id="KW-0658">Purine biosynthesis</keyword>
<keyword id="KW-1185">Reference proteome</keyword>
<keyword id="KW-0678">Repressor</keyword>
<keyword id="KW-0804">Transcription</keyword>
<keyword id="KW-0805">Transcription regulation</keyword>